<dbReference type="EC" id="2.1.1.77" evidence="1"/>
<dbReference type="EMBL" id="CP000254">
    <property type="protein sequence ID" value="ABD42542.1"/>
    <property type="molecule type" value="Genomic_DNA"/>
</dbReference>
<dbReference type="RefSeq" id="WP_011449795.1">
    <property type="nucleotide sequence ID" value="NC_007796.1"/>
</dbReference>
<dbReference type="SMR" id="Q2FRW3"/>
<dbReference type="FunCoup" id="Q2FRW3">
    <property type="interactions" value="53"/>
</dbReference>
<dbReference type="STRING" id="323259.Mhun_2850"/>
<dbReference type="EnsemblBacteria" id="ABD42542">
    <property type="protein sequence ID" value="ABD42542"/>
    <property type="gene ID" value="Mhun_2850"/>
</dbReference>
<dbReference type="GeneID" id="3923317"/>
<dbReference type="KEGG" id="mhu:Mhun_2850"/>
<dbReference type="eggNOG" id="arCOG00976">
    <property type="taxonomic scope" value="Archaea"/>
</dbReference>
<dbReference type="HOGENOM" id="CLU_055432_2_0_2"/>
<dbReference type="InParanoid" id="Q2FRW3"/>
<dbReference type="OrthoDB" id="33618at2157"/>
<dbReference type="Proteomes" id="UP000001941">
    <property type="component" value="Chromosome"/>
</dbReference>
<dbReference type="GO" id="GO:0005737">
    <property type="term" value="C:cytoplasm"/>
    <property type="evidence" value="ECO:0007669"/>
    <property type="project" value="UniProtKB-SubCell"/>
</dbReference>
<dbReference type="GO" id="GO:0004719">
    <property type="term" value="F:protein-L-isoaspartate (D-aspartate) O-methyltransferase activity"/>
    <property type="evidence" value="ECO:0007669"/>
    <property type="project" value="UniProtKB-UniRule"/>
</dbReference>
<dbReference type="GO" id="GO:0032259">
    <property type="term" value="P:methylation"/>
    <property type="evidence" value="ECO:0007669"/>
    <property type="project" value="UniProtKB-KW"/>
</dbReference>
<dbReference type="GO" id="GO:0036211">
    <property type="term" value="P:protein modification process"/>
    <property type="evidence" value="ECO:0007669"/>
    <property type="project" value="UniProtKB-UniRule"/>
</dbReference>
<dbReference type="GO" id="GO:0030091">
    <property type="term" value="P:protein repair"/>
    <property type="evidence" value="ECO:0007669"/>
    <property type="project" value="UniProtKB-UniRule"/>
</dbReference>
<dbReference type="CDD" id="cd02440">
    <property type="entry name" value="AdoMet_MTases"/>
    <property type="match status" value="1"/>
</dbReference>
<dbReference type="FunFam" id="3.40.50.150:FF:000010">
    <property type="entry name" value="Protein-L-isoaspartate O-methyltransferase"/>
    <property type="match status" value="1"/>
</dbReference>
<dbReference type="Gene3D" id="3.40.50.150">
    <property type="entry name" value="Vaccinia Virus protein VP39"/>
    <property type="match status" value="1"/>
</dbReference>
<dbReference type="HAMAP" id="MF_00090">
    <property type="entry name" value="PIMT"/>
    <property type="match status" value="1"/>
</dbReference>
<dbReference type="InterPro" id="IPR000682">
    <property type="entry name" value="PCMT"/>
</dbReference>
<dbReference type="InterPro" id="IPR029063">
    <property type="entry name" value="SAM-dependent_MTases_sf"/>
</dbReference>
<dbReference type="NCBIfam" id="TIGR00080">
    <property type="entry name" value="pimt"/>
    <property type="match status" value="1"/>
</dbReference>
<dbReference type="NCBIfam" id="NF001453">
    <property type="entry name" value="PRK00312.1"/>
    <property type="match status" value="1"/>
</dbReference>
<dbReference type="PANTHER" id="PTHR11579">
    <property type="entry name" value="PROTEIN-L-ISOASPARTATE O-METHYLTRANSFERASE"/>
    <property type="match status" value="1"/>
</dbReference>
<dbReference type="PANTHER" id="PTHR11579:SF0">
    <property type="entry name" value="PROTEIN-L-ISOASPARTATE(D-ASPARTATE) O-METHYLTRANSFERASE"/>
    <property type="match status" value="1"/>
</dbReference>
<dbReference type="Pfam" id="PF01135">
    <property type="entry name" value="PCMT"/>
    <property type="match status" value="1"/>
</dbReference>
<dbReference type="SUPFAM" id="SSF53335">
    <property type="entry name" value="S-adenosyl-L-methionine-dependent methyltransferases"/>
    <property type="match status" value="1"/>
</dbReference>
<organism>
    <name type="scientific">Methanospirillum hungatei JF-1 (strain ATCC 27890 / DSM 864 / NBRC 100397 / JF-1)</name>
    <dbReference type="NCBI Taxonomy" id="323259"/>
    <lineage>
        <taxon>Archaea</taxon>
        <taxon>Methanobacteriati</taxon>
        <taxon>Methanobacteriota</taxon>
        <taxon>Stenosarchaea group</taxon>
        <taxon>Methanomicrobia</taxon>
        <taxon>Methanomicrobiales</taxon>
        <taxon>Methanospirillaceae</taxon>
        <taxon>Methanospirillum</taxon>
    </lineage>
</organism>
<comment type="function">
    <text evidence="1">Catalyzes the methyl esterification of L-isoaspartyl residues in peptides and proteins that result from spontaneous decomposition of normal L-aspartyl and L-asparaginyl residues. It plays a role in the repair and/or degradation of damaged proteins.</text>
</comment>
<comment type="catalytic activity">
    <reaction evidence="1">
        <text>[protein]-L-isoaspartate + S-adenosyl-L-methionine = [protein]-L-isoaspartate alpha-methyl ester + S-adenosyl-L-homocysteine</text>
        <dbReference type="Rhea" id="RHEA:12705"/>
        <dbReference type="Rhea" id="RHEA-COMP:12143"/>
        <dbReference type="Rhea" id="RHEA-COMP:12144"/>
        <dbReference type="ChEBI" id="CHEBI:57856"/>
        <dbReference type="ChEBI" id="CHEBI:59789"/>
        <dbReference type="ChEBI" id="CHEBI:90596"/>
        <dbReference type="ChEBI" id="CHEBI:90598"/>
        <dbReference type="EC" id="2.1.1.77"/>
    </reaction>
</comment>
<comment type="subcellular location">
    <subcellularLocation>
        <location evidence="1">Cytoplasm</location>
    </subcellularLocation>
</comment>
<comment type="similarity">
    <text evidence="1">Belongs to the methyltransferase superfamily. L-isoaspartyl/D-aspartyl protein methyltransferase family.</text>
</comment>
<proteinExistence type="inferred from homology"/>
<accession>Q2FRW3</accession>
<reference key="1">
    <citation type="journal article" date="2016" name="Stand. Genomic Sci.">
        <title>Complete genome sequence of Methanospirillum hungatei type strain JF1.</title>
        <authorList>
            <person name="Gunsalus R.P."/>
            <person name="Cook L.E."/>
            <person name="Crable B."/>
            <person name="Rohlin L."/>
            <person name="McDonald E."/>
            <person name="Mouttaki H."/>
            <person name="Sieber J.R."/>
            <person name="Poweleit N."/>
            <person name="Zhou H."/>
            <person name="Lapidus A.L."/>
            <person name="Daligault H.E."/>
            <person name="Land M."/>
            <person name="Gilna P."/>
            <person name="Ivanova N."/>
            <person name="Kyrpides N."/>
            <person name="Culley D.E."/>
            <person name="McInerney M.J."/>
        </authorList>
    </citation>
    <scope>NUCLEOTIDE SEQUENCE [LARGE SCALE GENOMIC DNA]</scope>
    <source>
        <strain>ATCC 27890 / DSM 864 / NBRC 100397 / JF-1</strain>
    </source>
</reference>
<feature type="chain" id="PRO_0000351972" description="Protein-L-isoaspartate O-methyltransferase">
    <location>
        <begin position="1"/>
        <end position="216"/>
    </location>
</feature>
<feature type="active site" evidence="1">
    <location>
        <position position="62"/>
    </location>
</feature>
<gene>
    <name evidence="1" type="primary">pcm</name>
    <name type="ordered locus">Mhun_2850</name>
</gene>
<protein>
    <recommendedName>
        <fullName evidence="1">Protein-L-isoaspartate O-methyltransferase</fullName>
        <ecNumber evidence="1">2.1.1.77</ecNumber>
    </recommendedName>
    <alternativeName>
        <fullName evidence="1">L-isoaspartyl protein carboxyl methyltransferase</fullName>
    </alternativeName>
    <alternativeName>
        <fullName evidence="1">Protein L-isoaspartyl methyltransferase</fullName>
    </alternativeName>
    <alternativeName>
        <fullName evidence="1">Protein-beta-aspartate methyltransferase</fullName>
        <shortName evidence="1">PIMT</shortName>
    </alternativeName>
</protein>
<sequence>MESRLTEREEMVRWQIEARGVKNPRVLQAMRSVPRHLFVPEPYAREAYQDYPLPIGNDQTISQPYIVAVMTELLSPEKGDLILEIGTGSGYQAAILVACGASVISIERIPAVADLAKRNLTRAGIRNVLVLCQDGTQGYAEKAPYNGILITAATPALPEPLLEELADGGRLVAPVGDRDIQELTRVTRNKDEYHTERFGAVRFVPLIGMYGWKKEW</sequence>
<name>PIMT_METHJ</name>
<evidence type="ECO:0000255" key="1">
    <source>
        <dbReference type="HAMAP-Rule" id="MF_00090"/>
    </source>
</evidence>
<keyword id="KW-0963">Cytoplasm</keyword>
<keyword id="KW-0489">Methyltransferase</keyword>
<keyword id="KW-1185">Reference proteome</keyword>
<keyword id="KW-0949">S-adenosyl-L-methionine</keyword>
<keyword id="KW-0808">Transferase</keyword>